<dbReference type="EC" id="3.1.26.5" evidence="1"/>
<dbReference type="EMBL" id="X81989">
    <property type="protein sequence ID" value="CAA57516.1"/>
    <property type="molecule type" value="Genomic_DNA"/>
</dbReference>
<dbReference type="EMBL" id="BA000022">
    <property type="protein sequence ID" value="BAA18242.1"/>
    <property type="molecule type" value="Genomic_DNA"/>
</dbReference>
<dbReference type="PIR" id="S75681">
    <property type="entry name" value="S75681"/>
</dbReference>
<dbReference type="SMR" id="Q55005"/>
<dbReference type="FunCoup" id="Q55005">
    <property type="interactions" value="210"/>
</dbReference>
<dbReference type="STRING" id="1148.gene:10499116"/>
<dbReference type="PaxDb" id="1148-1653327"/>
<dbReference type="EnsemblBacteria" id="BAA18242">
    <property type="protein sequence ID" value="BAA18242"/>
    <property type="gene ID" value="BAA18242"/>
</dbReference>
<dbReference type="KEGG" id="syn:slr1469"/>
<dbReference type="eggNOG" id="COG0594">
    <property type="taxonomic scope" value="Bacteria"/>
</dbReference>
<dbReference type="InParanoid" id="Q55005"/>
<dbReference type="PhylomeDB" id="Q55005"/>
<dbReference type="Proteomes" id="UP000001425">
    <property type="component" value="Chromosome"/>
</dbReference>
<dbReference type="GO" id="GO:0030677">
    <property type="term" value="C:ribonuclease P complex"/>
    <property type="evidence" value="ECO:0000318"/>
    <property type="project" value="GO_Central"/>
</dbReference>
<dbReference type="GO" id="GO:0042781">
    <property type="term" value="F:3'-tRNA processing endoribonuclease activity"/>
    <property type="evidence" value="ECO:0000318"/>
    <property type="project" value="GO_Central"/>
</dbReference>
<dbReference type="GO" id="GO:0004526">
    <property type="term" value="F:ribonuclease P activity"/>
    <property type="evidence" value="ECO:0000318"/>
    <property type="project" value="GO_Central"/>
</dbReference>
<dbReference type="GO" id="GO:0000049">
    <property type="term" value="F:tRNA binding"/>
    <property type="evidence" value="ECO:0007669"/>
    <property type="project" value="UniProtKB-UniRule"/>
</dbReference>
<dbReference type="GO" id="GO:0042780">
    <property type="term" value="P:tRNA 3'-end processing"/>
    <property type="evidence" value="ECO:0000318"/>
    <property type="project" value="GO_Central"/>
</dbReference>
<dbReference type="GO" id="GO:0001682">
    <property type="term" value="P:tRNA 5'-leader removal"/>
    <property type="evidence" value="ECO:0007669"/>
    <property type="project" value="UniProtKB-UniRule"/>
</dbReference>
<dbReference type="FunFam" id="3.30.230.10:FF:000021">
    <property type="entry name" value="Ribonuclease P protein component"/>
    <property type="match status" value="1"/>
</dbReference>
<dbReference type="Gene3D" id="3.30.230.10">
    <property type="match status" value="1"/>
</dbReference>
<dbReference type="HAMAP" id="MF_00227">
    <property type="entry name" value="RNase_P"/>
    <property type="match status" value="1"/>
</dbReference>
<dbReference type="InterPro" id="IPR020568">
    <property type="entry name" value="Ribosomal_Su5_D2-typ_SF"/>
</dbReference>
<dbReference type="InterPro" id="IPR014721">
    <property type="entry name" value="Ribsml_uS5_D2-typ_fold_subgr"/>
</dbReference>
<dbReference type="InterPro" id="IPR000100">
    <property type="entry name" value="RNase_P"/>
</dbReference>
<dbReference type="InterPro" id="IPR020539">
    <property type="entry name" value="RNase_P_CS"/>
</dbReference>
<dbReference type="NCBIfam" id="TIGR00188">
    <property type="entry name" value="rnpA"/>
    <property type="match status" value="1"/>
</dbReference>
<dbReference type="PANTHER" id="PTHR33992">
    <property type="entry name" value="RIBONUCLEASE P PROTEIN COMPONENT"/>
    <property type="match status" value="1"/>
</dbReference>
<dbReference type="PANTHER" id="PTHR33992:SF1">
    <property type="entry name" value="RIBONUCLEASE P PROTEIN COMPONENT"/>
    <property type="match status" value="1"/>
</dbReference>
<dbReference type="Pfam" id="PF00825">
    <property type="entry name" value="Ribonuclease_P"/>
    <property type="match status" value="1"/>
</dbReference>
<dbReference type="SUPFAM" id="SSF54211">
    <property type="entry name" value="Ribosomal protein S5 domain 2-like"/>
    <property type="match status" value="1"/>
</dbReference>
<dbReference type="PROSITE" id="PS00648">
    <property type="entry name" value="RIBONUCLEASE_P"/>
    <property type="match status" value="1"/>
</dbReference>
<proteinExistence type="inferred from homology"/>
<reference key="1">
    <citation type="journal article" date="1996" name="Eur. J. Biochem.">
        <title>Cloning, purification and characterization of the protein subunit of ribonuclease P from the cyanobacterium Synechocystis sp. PCC 6803.</title>
        <authorList>
            <person name="Pascual A."/>
            <person name="Vioque A."/>
        </authorList>
    </citation>
    <scope>NUCLEOTIDE SEQUENCE [GENOMIC DNA]</scope>
</reference>
<reference key="2">
    <citation type="journal article" date="1996" name="DNA Res.">
        <title>Sequence analysis of the genome of the unicellular cyanobacterium Synechocystis sp. strain PCC6803. II. Sequence determination of the entire genome and assignment of potential protein-coding regions.</title>
        <authorList>
            <person name="Kaneko T."/>
            <person name="Sato S."/>
            <person name="Kotani H."/>
            <person name="Tanaka A."/>
            <person name="Asamizu E."/>
            <person name="Nakamura Y."/>
            <person name="Miyajima N."/>
            <person name="Hirosawa M."/>
            <person name="Sugiura M."/>
            <person name="Sasamoto S."/>
            <person name="Kimura T."/>
            <person name="Hosouchi T."/>
            <person name="Matsuno A."/>
            <person name="Muraki A."/>
            <person name="Nakazaki N."/>
            <person name="Naruo K."/>
            <person name="Okumura S."/>
            <person name="Shimpo S."/>
            <person name="Takeuchi C."/>
            <person name="Wada T."/>
            <person name="Watanabe A."/>
            <person name="Yamada M."/>
            <person name="Yasuda M."/>
            <person name="Tabata S."/>
        </authorList>
    </citation>
    <scope>NUCLEOTIDE SEQUENCE [LARGE SCALE GENOMIC DNA]</scope>
    <source>
        <strain>ATCC 27184 / PCC 6803 / Kazusa</strain>
    </source>
</reference>
<keyword id="KW-0255">Endonuclease</keyword>
<keyword id="KW-0378">Hydrolase</keyword>
<keyword id="KW-0540">Nuclease</keyword>
<keyword id="KW-1185">Reference proteome</keyword>
<keyword id="KW-0694">RNA-binding</keyword>
<keyword id="KW-0819">tRNA processing</keyword>
<comment type="function">
    <text>RNaseP catalyzes the removal of the 5'-leader sequence from pre-tRNA to produce the mature 5'-terminus. It can also cleave other RNA substrates such as 4.5S RNA. The protein component plays an auxiliary but essential role in vivo by binding to the 5'-leader sequence and broadening the substrate specificity of the ribozyme.</text>
</comment>
<comment type="catalytic activity">
    <reaction evidence="1">
        <text>Endonucleolytic cleavage of RNA, removing 5'-extranucleotides from tRNA precursor.</text>
        <dbReference type="EC" id="3.1.26.5"/>
    </reaction>
</comment>
<comment type="subunit">
    <text>Consists of a catalytic RNA component (M1 or rnpB) and a protein subunit.</text>
</comment>
<comment type="similarity">
    <text evidence="1">Belongs to the RnpA family.</text>
</comment>
<feature type="chain" id="PRO_0000198551" description="Ribonuclease P protein component">
    <location>
        <begin position="1"/>
        <end position="124"/>
    </location>
</feature>
<organism>
    <name type="scientific">Synechocystis sp. (strain ATCC 27184 / PCC 6803 / Kazusa)</name>
    <dbReference type="NCBI Taxonomy" id="1111708"/>
    <lineage>
        <taxon>Bacteria</taxon>
        <taxon>Bacillati</taxon>
        <taxon>Cyanobacteriota</taxon>
        <taxon>Cyanophyceae</taxon>
        <taxon>Synechococcales</taxon>
        <taxon>Merismopediaceae</taxon>
        <taxon>Synechocystis</taxon>
    </lineage>
</organism>
<protein>
    <recommendedName>
        <fullName evidence="1">Ribonuclease P protein component</fullName>
        <shortName evidence="1">RNase P protein</shortName>
        <shortName evidence="1">RNaseP protein</shortName>
        <ecNumber evidence="1">3.1.26.5</ecNumber>
    </recommendedName>
    <alternativeName>
        <fullName evidence="1">Protein C5</fullName>
    </alternativeName>
</protein>
<sequence length="124" mass="14498">MGLPKTLRLKHWQDFQTVYQQGKRHRHSNLLMRVLGDRQADHSRFGITVSQKVSKKATVRNRLKRQIRAVINHFQPQIKPGFDVVIIVLPQGIGCNYERFLRELEQLFSQAGIIDHGHSRNHLL</sequence>
<evidence type="ECO:0000255" key="1">
    <source>
        <dbReference type="HAMAP-Rule" id="MF_00227"/>
    </source>
</evidence>
<name>RNPA_SYNY3</name>
<accession>Q55005</accession>
<gene>
    <name evidence="1" type="primary">rnpA</name>
    <name type="ordered locus">slr1469</name>
</gene>